<sequence>MAKQTNYAQPWSQFYGPNLGYVIEMYEQYLDDPNSIDPELKQLFEQWGAPVLEEPVSPADDETAKTHQTFRLPETPTIFSKLVAAVKLADSIRHYGHLVADTNPLVKKEKKLRRLELDEYDLTEEDLKRIPVAFLCPHAPAHVKNGWDAILHLRKIYTDKIAFEFSQVHNLEERNWLIQQIESGAYYPSLANKERVALLRRLTEVEGFEKFIHRTYVGQKRFSIEGLDSMVPLLDELVRQAIEHEIDAVNIGMAHRGRLNVLAHVLGKPYEMIFAEFQHAESKNFIPSEGSVAITYGWTGDVKYHLGAARRLRNQSAHTMRITLANNPSHLEVVNPVVLGYTRAAQEDRTKPGVPVQNTDASFAILIHGDAAFPGQGIVAETLNLSQLRGYTTGGTIHIIANNMIGFTTESYDSRSTTYASDMAKGFEVPIVHVNADDPEACLAAACLAFAYRQRFKKDFVIDLIGYRRFGHNEMDEPMATNPTMYAIINQHPTVRKLYAQKLMEKGIITEREVDEMEQEVAERLKIAYERVPKNEDELDFIMDPPKPVVDRLPEVKTSVAKDVLHRVNEELLQFPDGFNVFNKLERILKRRSGVFAQNGKVDWAHAEILAFATILQDGVPIRLTGQDSQRGTFAQRHLVLHDVKTGEEYVPLHHISGAKASFVVYNSPLTEAAVLGYEYGYNVYAPETLVLWEAQFGDFANMAQVMFDQFISSGRAKWGQKSGLVMLLPHGYEGQGPEHSSGRVERFLQLAAENNWTVANLSTAAQYFHILRRQAALLTREEVRPLIIMTPKSLLRHPLAASDAEVFVDGAFSPVLEQPGLGADAGKVERIVFGTGKLMIDLAEQIGKMESLDWLHIVRIEELYPFPEEAVKDIIARYPNVKELVWVQEEPKNMGAWLYMEPRLRALAPEGVDVSYIGRRRRASPAEGDPVVHRKEQERIIRCALTKHE</sequence>
<proteinExistence type="inferred from homology"/>
<reference key="1">
    <citation type="journal article" date="2004" name="Nucleic Acids Res.">
        <title>Thermoadaptation trait revealed by the genome sequence of thermophilic Geobacillus kaustophilus.</title>
        <authorList>
            <person name="Takami H."/>
            <person name="Takaki Y."/>
            <person name="Chee G.-J."/>
            <person name="Nishi S."/>
            <person name="Shimamura S."/>
            <person name="Suzuki H."/>
            <person name="Matsui S."/>
            <person name="Uchiyama I."/>
        </authorList>
    </citation>
    <scope>NUCLEOTIDE SEQUENCE [LARGE SCALE GENOMIC DNA]</scope>
    <source>
        <strain>HTA426</strain>
    </source>
</reference>
<dbReference type="EC" id="1.2.4.2" evidence="1"/>
<dbReference type="EMBL" id="BA000043">
    <property type="protein sequence ID" value="BAD75308.1"/>
    <property type="molecule type" value="Genomic_DNA"/>
</dbReference>
<dbReference type="RefSeq" id="WP_011230523.1">
    <property type="nucleotide sequence ID" value="NC_006510.1"/>
</dbReference>
<dbReference type="SMR" id="Q5L172"/>
<dbReference type="STRING" id="235909.GK1023"/>
<dbReference type="KEGG" id="gka:GK1023"/>
<dbReference type="PATRIC" id="fig|235909.7.peg.1118"/>
<dbReference type="eggNOG" id="COG0567">
    <property type="taxonomic scope" value="Bacteria"/>
</dbReference>
<dbReference type="HOGENOM" id="CLU_004709_1_0_9"/>
<dbReference type="Proteomes" id="UP000001172">
    <property type="component" value="Chromosome"/>
</dbReference>
<dbReference type="GO" id="GO:0005829">
    <property type="term" value="C:cytosol"/>
    <property type="evidence" value="ECO:0007669"/>
    <property type="project" value="TreeGrafter"/>
</dbReference>
<dbReference type="GO" id="GO:0045252">
    <property type="term" value="C:oxoglutarate dehydrogenase complex"/>
    <property type="evidence" value="ECO:0007669"/>
    <property type="project" value="TreeGrafter"/>
</dbReference>
<dbReference type="GO" id="GO:0004591">
    <property type="term" value="F:oxoglutarate dehydrogenase (succinyl-transferring) activity"/>
    <property type="evidence" value="ECO:0007669"/>
    <property type="project" value="UniProtKB-UniRule"/>
</dbReference>
<dbReference type="GO" id="GO:0030976">
    <property type="term" value="F:thiamine pyrophosphate binding"/>
    <property type="evidence" value="ECO:0007669"/>
    <property type="project" value="UniProtKB-UniRule"/>
</dbReference>
<dbReference type="GO" id="GO:0006096">
    <property type="term" value="P:glycolytic process"/>
    <property type="evidence" value="ECO:0007669"/>
    <property type="project" value="UniProtKB-UniRule"/>
</dbReference>
<dbReference type="GO" id="GO:0006099">
    <property type="term" value="P:tricarboxylic acid cycle"/>
    <property type="evidence" value="ECO:0007669"/>
    <property type="project" value="TreeGrafter"/>
</dbReference>
<dbReference type="CDD" id="cd02016">
    <property type="entry name" value="TPP_E1_OGDC_like"/>
    <property type="match status" value="1"/>
</dbReference>
<dbReference type="FunFam" id="3.40.50.11610:FF:000002">
    <property type="entry name" value="2-oxoglutarate dehydrogenase E1 component"/>
    <property type="match status" value="1"/>
</dbReference>
<dbReference type="FunFam" id="3.40.50.970:FF:000036">
    <property type="entry name" value="2-oxoglutarate dehydrogenase E1 component"/>
    <property type="match status" value="1"/>
</dbReference>
<dbReference type="Gene3D" id="3.40.50.12470">
    <property type="match status" value="1"/>
</dbReference>
<dbReference type="Gene3D" id="3.40.50.970">
    <property type="match status" value="1"/>
</dbReference>
<dbReference type="Gene3D" id="3.40.50.11610">
    <property type="entry name" value="Multifunctional 2-oxoglutarate metabolism enzyme, C-terminal domain"/>
    <property type="match status" value="1"/>
</dbReference>
<dbReference type="Gene3D" id="1.10.287.1150">
    <property type="entry name" value="TPP helical domain"/>
    <property type="match status" value="1"/>
</dbReference>
<dbReference type="HAMAP" id="MF_01169">
    <property type="entry name" value="SucA_OdhA"/>
    <property type="match status" value="1"/>
</dbReference>
<dbReference type="InterPro" id="IPR032106">
    <property type="entry name" value="2-oxogl_dehyd_N"/>
</dbReference>
<dbReference type="InterPro" id="IPR011603">
    <property type="entry name" value="2oxoglutarate_DH_E1"/>
</dbReference>
<dbReference type="InterPro" id="IPR023784">
    <property type="entry name" value="2oxoglutarate_DH_E1_bac"/>
</dbReference>
<dbReference type="InterPro" id="IPR001017">
    <property type="entry name" value="DH_E1"/>
</dbReference>
<dbReference type="InterPro" id="IPR042179">
    <property type="entry name" value="KGD_C_sf"/>
</dbReference>
<dbReference type="InterPro" id="IPR031717">
    <property type="entry name" value="ODO-1/KGD_C"/>
</dbReference>
<dbReference type="InterPro" id="IPR029061">
    <property type="entry name" value="THDP-binding"/>
</dbReference>
<dbReference type="InterPro" id="IPR005475">
    <property type="entry name" value="Transketolase-like_Pyr-bd"/>
</dbReference>
<dbReference type="NCBIfam" id="TIGR00239">
    <property type="entry name" value="2oxo_dh_E1"/>
    <property type="match status" value="1"/>
</dbReference>
<dbReference type="NCBIfam" id="NF006914">
    <property type="entry name" value="PRK09404.1"/>
    <property type="match status" value="1"/>
</dbReference>
<dbReference type="NCBIfam" id="NF008907">
    <property type="entry name" value="PRK12270.1"/>
    <property type="match status" value="1"/>
</dbReference>
<dbReference type="PANTHER" id="PTHR23152:SF4">
    <property type="entry name" value="2-OXOADIPATE DEHYDROGENASE COMPLEX COMPONENT E1"/>
    <property type="match status" value="1"/>
</dbReference>
<dbReference type="PANTHER" id="PTHR23152">
    <property type="entry name" value="2-OXOGLUTARATE DEHYDROGENASE"/>
    <property type="match status" value="1"/>
</dbReference>
<dbReference type="Pfam" id="PF16078">
    <property type="entry name" value="2-oxogl_dehyd_N"/>
    <property type="match status" value="1"/>
</dbReference>
<dbReference type="Pfam" id="PF00676">
    <property type="entry name" value="E1_dh"/>
    <property type="match status" value="1"/>
</dbReference>
<dbReference type="Pfam" id="PF16870">
    <property type="entry name" value="OxoGdeHyase_C"/>
    <property type="match status" value="1"/>
</dbReference>
<dbReference type="Pfam" id="PF02779">
    <property type="entry name" value="Transket_pyr"/>
    <property type="match status" value="1"/>
</dbReference>
<dbReference type="PIRSF" id="PIRSF000157">
    <property type="entry name" value="Oxoglu_dh_E1"/>
    <property type="match status" value="1"/>
</dbReference>
<dbReference type="SMART" id="SM00861">
    <property type="entry name" value="Transket_pyr"/>
    <property type="match status" value="1"/>
</dbReference>
<dbReference type="SUPFAM" id="SSF52518">
    <property type="entry name" value="Thiamin diphosphate-binding fold (THDP-binding)"/>
    <property type="match status" value="2"/>
</dbReference>
<organism>
    <name type="scientific">Geobacillus kaustophilus (strain HTA426)</name>
    <dbReference type="NCBI Taxonomy" id="235909"/>
    <lineage>
        <taxon>Bacteria</taxon>
        <taxon>Bacillati</taxon>
        <taxon>Bacillota</taxon>
        <taxon>Bacilli</taxon>
        <taxon>Bacillales</taxon>
        <taxon>Anoxybacillaceae</taxon>
        <taxon>Geobacillus</taxon>
        <taxon>Geobacillus thermoleovorans group</taxon>
    </lineage>
</organism>
<accession>Q5L172</accession>
<gene>
    <name evidence="1" type="primary">odhA</name>
    <name type="ordered locus">GK1023</name>
</gene>
<evidence type="ECO:0000255" key="1">
    <source>
        <dbReference type="HAMAP-Rule" id="MF_01169"/>
    </source>
</evidence>
<protein>
    <recommendedName>
        <fullName evidence="1">2-oxoglutarate dehydrogenase E1 component</fullName>
        <ecNumber evidence="1">1.2.4.2</ecNumber>
    </recommendedName>
    <alternativeName>
        <fullName evidence="1">Alpha-ketoglutarate dehydrogenase</fullName>
    </alternativeName>
</protein>
<comment type="function">
    <text evidence="1">E1 component of the 2-oxoglutarate dehydrogenase (OGDH) complex which catalyzes the decarboxylation of 2-oxoglutarate, the first step in the conversion of 2-oxoglutarate to succinyl-CoA and CO(2).</text>
</comment>
<comment type="catalytic activity">
    <reaction evidence="1">
        <text>N(6)-[(R)-lipoyl]-L-lysyl-[protein] + 2-oxoglutarate + H(+) = N(6)-[(R)-S(8)-succinyldihydrolipoyl]-L-lysyl-[protein] + CO2</text>
        <dbReference type="Rhea" id="RHEA:12188"/>
        <dbReference type="Rhea" id="RHEA-COMP:10474"/>
        <dbReference type="Rhea" id="RHEA-COMP:20092"/>
        <dbReference type="ChEBI" id="CHEBI:15378"/>
        <dbReference type="ChEBI" id="CHEBI:16526"/>
        <dbReference type="ChEBI" id="CHEBI:16810"/>
        <dbReference type="ChEBI" id="CHEBI:83099"/>
        <dbReference type="ChEBI" id="CHEBI:83120"/>
        <dbReference type="EC" id="1.2.4.2"/>
    </reaction>
</comment>
<comment type="cofactor">
    <cofactor evidence="1">
        <name>thiamine diphosphate</name>
        <dbReference type="ChEBI" id="CHEBI:58937"/>
    </cofactor>
</comment>
<comment type="subunit">
    <text evidence="1">Homodimer. Part of the 2-oxoglutarate dehydrogenase (OGDH) complex composed of E1 (2-oxoglutarate dehydrogenase), E2 (dihydrolipoamide succinyltransferase) and E3 (dihydrolipoamide dehydrogenase); the complex contains multiple copies of the three enzymatic components (E1, E2 and E3).</text>
</comment>
<comment type="similarity">
    <text evidence="1">Belongs to the alpha-ketoglutarate dehydrogenase family.</text>
</comment>
<name>ODO1_GEOKA</name>
<keyword id="KW-0324">Glycolysis</keyword>
<keyword id="KW-0560">Oxidoreductase</keyword>
<keyword id="KW-1185">Reference proteome</keyword>
<keyword id="KW-0786">Thiamine pyrophosphate</keyword>
<feature type="chain" id="PRO_0000162172" description="2-oxoglutarate dehydrogenase E1 component">
    <location>
        <begin position="1"/>
        <end position="950"/>
    </location>
</feature>